<sequence>MQTYLVGGAVRDALLGLKVVDKDWMVVGATPEQMLAQGYEQVGSDFPVFLHPKTKQEYALARTERKSGKGYTGFICYSAPDVTLEQDLMRRDLTINAIAQEKDGRLIDPYNGQQDLDNKILRHVSPAFVEDPLRVLRVARFSARFAHLGFTIAPETIALMQEMVVAGELEALTPERVWKEWEKSLSTENPEVFLTVLRQCGALKVVMPEIDALFGVPQPAQWHPEIDCGIHTLMVAKQAAELSPNKVIRFAAQVHDLGKALSPKDDLPSHKMHCKDGLKPIKALCQRLRVPNDYRDTALMVCAQHTKIHHANEMRPATFVNILDQIDSWRKPERVIQLALCCRADARGRTGHENDAYLQADILLAAFDAAQQVDVKPIVAAGFKGKDIKEQLAIHRTAAVELAIKPLQSKA</sequence>
<dbReference type="EC" id="2.7.7.72" evidence="1"/>
<dbReference type="EC" id="3.1.3.-" evidence="1"/>
<dbReference type="EC" id="3.1.4.-" evidence="1"/>
<dbReference type="EMBL" id="CR378664">
    <property type="protein sequence ID" value="CAG18870.1"/>
    <property type="molecule type" value="Genomic_DNA"/>
</dbReference>
<dbReference type="RefSeq" id="WP_011217226.1">
    <property type="nucleotide sequence ID" value="NC_006370.1"/>
</dbReference>
<dbReference type="SMR" id="Q6LV05"/>
<dbReference type="STRING" id="298386.PBPRA0439"/>
<dbReference type="KEGG" id="ppr:PBPRA0439"/>
<dbReference type="eggNOG" id="COG0617">
    <property type="taxonomic scope" value="Bacteria"/>
</dbReference>
<dbReference type="HOGENOM" id="CLU_015961_1_1_6"/>
<dbReference type="Proteomes" id="UP000000593">
    <property type="component" value="Chromosome 1"/>
</dbReference>
<dbReference type="GO" id="GO:0005524">
    <property type="term" value="F:ATP binding"/>
    <property type="evidence" value="ECO:0007669"/>
    <property type="project" value="UniProtKB-UniRule"/>
</dbReference>
<dbReference type="GO" id="GO:0004810">
    <property type="term" value="F:CCA tRNA nucleotidyltransferase activity"/>
    <property type="evidence" value="ECO:0007669"/>
    <property type="project" value="UniProtKB-UniRule"/>
</dbReference>
<dbReference type="GO" id="GO:0004112">
    <property type="term" value="F:cyclic-nucleotide phosphodiesterase activity"/>
    <property type="evidence" value="ECO:0007669"/>
    <property type="project" value="UniProtKB-UniRule"/>
</dbReference>
<dbReference type="GO" id="GO:0000287">
    <property type="term" value="F:magnesium ion binding"/>
    <property type="evidence" value="ECO:0007669"/>
    <property type="project" value="UniProtKB-UniRule"/>
</dbReference>
<dbReference type="GO" id="GO:0016791">
    <property type="term" value="F:phosphatase activity"/>
    <property type="evidence" value="ECO:0007669"/>
    <property type="project" value="UniProtKB-UniRule"/>
</dbReference>
<dbReference type="GO" id="GO:0000049">
    <property type="term" value="F:tRNA binding"/>
    <property type="evidence" value="ECO:0007669"/>
    <property type="project" value="UniProtKB-UniRule"/>
</dbReference>
<dbReference type="GO" id="GO:0042245">
    <property type="term" value="P:RNA repair"/>
    <property type="evidence" value="ECO:0007669"/>
    <property type="project" value="UniProtKB-KW"/>
</dbReference>
<dbReference type="GO" id="GO:0001680">
    <property type="term" value="P:tRNA 3'-terminal CCA addition"/>
    <property type="evidence" value="ECO:0007669"/>
    <property type="project" value="UniProtKB-UniRule"/>
</dbReference>
<dbReference type="CDD" id="cd00077">
    <property type="entry name" value="HDc"/>
    <property type="match status" value="1"/>
</dbReference>
<dbReference type="CDD" id="cd05398">
    <property type="entry name" value="NT_ClassII-CCAase"/>
    <property type="match status" value="1"/>
</dbReference>
<dbReference type="FunFam" id="1.10.3090.10:FF:000001">
    <property type="entry name" value="Multifunctional CCA protein"/>
    <property type="match status" value="1"/>
</dbReference>
<dbReference type="FunFam" id="3.30.460.10:FF:000016">
    <property type="entry name" value="Multifunctional CCA protein"/>
    <property type="match status" value="1"/>
</dbReference>
<dbReference type="Gene3D" id="3.30.460.10">
    <property type="entry name" value="Beta Polymerase, domain 2"/>
    <property type="match status" value="1"/>
</dbReference>
<dbReference type="Gene3D" id="1.10.3090.10">
    <property type="entry name" value="cca-adding enzyme, domain 2"/>
    <property type="match status" value="1"/>
</dbReference>
<dbReference type="HAMAP" id="MF_01261">
    <property type="entry name" value="CCA_bact_type1"/>
    <property type="match status" value="1"/>
</dbReference>
<dbReference type="HAMAP" id="MF_01262">
    <property type="entry name" value="CCA_bact_type2"/>
    <property type="match status" value="1"/>
</dbReference>
<dbReference type="InterPro" id="IPR012006">
    <property type="entry name" value="CCA_bact"/>
</dbReference>
<dbReference type="InterPro" id="IPR003607">
    <property type="entry name" value="HD/PDEase_dom"/>
</dbReference>
<dbReference type="InterPro" id="IPR006674">
    <property type="entry name" value="HD_domain"/>
</dbReference>
<dbReference type="InterPro" id="IPR043519">
    <property type="entry name" value="NT_sf"/>
</dbReference>
<dbReference type="InterPro" id="IPR002646">
    <property type="entry name" value="PolA_pol_head_dom"/>
</dbReference>
<dbReference type="InterPro" id="IPR032828">
    <property type="entry name" value="PolyA_RNA-bd"/>
</dbReference>
<dbReference type="InterPro" id="IPR050124">
    <property type="entry name" value="tRNA_CCA-adding_enzyme"/>
</dbReference>
<dbReference type="NCBIfam" id="NF008137">
    <property type="entry name" value="PRK10885.1"/>
    <property type="match status" value="1"/>
</dbReference>
<dbReference type="PANTHER" id="PTHR47545">
    <property type="entry name" value="MULTIFUNCTIONAL CCA PROTEIN"/>
    <property type="match status" value="1"/>
</dbReference>
<dbReference type="PANTHER" id="PTHR47545:SF1">
    <property type="entry name" value="MULTIFUNCTIONAL CCA PROTEIN"/>
    <property type="match status" value="1"/>
</dbReference>
<dbReference type="Pfam" id="PF01966">
    <property type="entry name" value="HD"/>
    <property type="match status" value="1"/>
</dbReference>
<dbReference type="Pfam" id="PF01743">
    <property type="entry name" value="PolyA_pol"/>
    <property type="match status" value="1"/>
</dbReference>
<dbReference type="Pfam" id="PF12627">
    <property type="entry name" value="PolyA_pol_RNAbd"/>
    <property type="match status" value="1"/>
</dbReference>
<dbReference type="PIRSF" id="PIRSF000813">
    <property type="entry name" value="CCA_bact"/>
    <property type="match status" value="1"/>
</dbReference>
<dbReference type="SUPFAM" id="SSF81301">
    <property type="entry name" value="Nucleotidyltransferase"/>
    <property type="match status" value="1"/>
</dbReference>
<dbReference type="SUPFAM" id="SSF81891">
    <property type="entry name" value="Poly A polymerase C-terminal region-like"/>
    <property type="match status" value="1"/>
</dbReference>
<dbReference type="PROSITE" id="PS51831">
    <property type="entry name" value="HD"/>
    <property type="match status" value="1"/>
</dbReference>
<comment type="function">
    <text evidence="1">Catalyzes the addition and repair of the essential 3'-terminal CCA sequence in tRNAs without using a nucleic acid template. Adds these three nucleotides in the order of C, C, and A to the tRNA nucleotide-73, using CTP and ATP as substrates and producing inorganic pyrophosphate. tRNA 3'-terminal CCA addition is required both for tRNA processing and repair. Also involved in tRNA surveillance by mediating tandem CCA addition to generate a CCACCA at the 3' terminus of unstable tRNAs. While stable tRNAs receive only 3'-terminal CCA, unstable tRNAs are marked with CCACCA and rapidly degraded.</text>
</comment>
<comment type="catalytic activity">
    <reaction evidence="1">
        <text>a tRNA precursor + 2 CTP + ATP = a tRNA with a 3' CCA end + 3 diphosphate</text>
        <dbReference type="Rhea" id="RHEA:14433"/>
        <dbReference type="Rhea" id="RHEA-COMP:10465"/>
        <dbReference type="Rhea" id="RHEA-COMP:10468"/>
        <dbReference type="ChEBI" id="CHEBI:30616"/>
        <dbReference type="ChEBI" id="CHEBI:33019"/>
        <dbReference type="ChEBI" id="CHEBI:37563"/>
        <dbReference type="ChEBI" id="CHEBI:74896"/>
        <dbReference type="ChEBI" id="CHEBI:83071"/>
        <dbReference type="EC" id="2.7.7.72"/>
    </reaction>
</comment>
<comment type="catalytic activity">
    <reaction evidence="1">
        <text>a tRNA with a 3' CCA end + 2 CTP + ATP = a tRNA with a 3' CCACCA end + 3 diphosphate</text>
        <dbReference type="Rhea" id="RHEA:76235"/>
        <dbReference type="Rhea" id="RHEA-COMP:10468"/>
        <dbReference type="Rhea" id="RHEA-COMP:18655"/>
        <dbReference type="ChEBI" id="CHEBI:30616"/>
        <dbReference type="ChEBI" id="CHEBI:33019"/>
        <dbReference type="ChEBI" id="CHEBI:37563"/>
        <dbReference type="ChEBI" id="CHEBI:83071"/>
        <dbReference type="ChEBI" id="CHEBI:195187"/>
    </reaction>
    <physiologicalReaction direction="left-to-right" evidence="1">
        <dbReference type="Rhea" id="RHEA:76236"/>
    </physiologicalReaction>
</comment>
<comment type="cofactor">
    <cofactor evidence="1">
        <name>Mg(2+)</name>
        <dbReference type="ChEBI" id="CHEBI:18420"/>
    </cofactor>
    <text evidence="1">Magnesium is required for nucleotidyltransferase activity.</text>
</comment>
<comment type="cofactor">
    <cofactor evidence="1">
        <name>Ni(2+)</name>
        <dbReference type="ChEBI" id="CHEBI:49786"/>
    </cofactor>
    <text evidence="1">Nickel for phosphatase activity.</text>
</comment>
<comment type="subunit">
    <text evidence="1">Monomer. Can also form homodimers and oligomers.</text>
</comment>
<comment type="domain">
    <text evidence="1">Comprises two domains: an N-terminal domain containing the nucleotidyltransferase activity and a C-terminal HD domain associated with both phosphodiesterase and phosphatase activities.</text>
</comment>
<comment type="miscellaneous">
    <text evidence="1">A single active site specifically recognizes both ATP and CTP and is responsible for their addition.</text>
</comment>
<comment type="similarity">
    <text evidence="1">Belongs to the tRNA nucleotidyltransferase/poly(A) polymerase family. Bacterial CCA-adding enzyme type 1 subfamily.</text>
</comment>
<accession>Q6LV05</accession>
<name>CCA_PHOPR</name>
<keyword id="KW-0067">ATP-binding</keyword>
<keyword id="KW-0378">Hydrolase</keyword>
<keyword id="KW-0460">Magnesium</keyword>
<keyword id="KW-0479">Metal-binding</keyword>
<keyword id="KW-0511">Multifunctional enzyme</keyword>
<keyword id="KW-0533">Nickel</keyword>
<keyword id="KW-0547">Nucleotide-binding</keyword>
<keyword id="KW-0548">Nucleotidyltransferase</keyword>
<keyword id="KW-1185">Reference proteome</keyword>
<keyword id="KW-0692">RNA repair</keyword>
<keyword id="KW-0694">RNA-binding</keyword>
<keyword id="KW-0808">Transferase</keyword>
<keyword id="KW-0819">tRNA processing</keyword>
<organism>
    <name type="scientific">Photobacterium profundum (strain SS9)</name>
    <dbReference type="NCBI Taxonomy" id="298386"/>
    <lineage>
        <taxon>Bacteria</taxon>
        <taxon>Pseudomonadati</taxon>
        <taxon>Pseudomonadota</taxon>
        <taxon>Gammaproteobacteria</taxon>
        <taxon>Vibrionales</taxon>
        <taxon>Vibrionaceae</taxon>
        <taxon>Photobacterium</taxon>
    </lineage>
</organism>
<feature type="chain" id="PRO_0000138992" description="Multifunctional CCA protein">
    <location>
        <begin position="1"/>
        <end position="411"/>
    </location>
</feature>
<feature type="domain" description="HD" evidence="1">
    <location>
        <begin position="228"/>
        <end position="329"/>
    </location>
</feature>
<feature type="binding site" evidence="1">
    <location>
        <position position="8"/>
    </location>
    <ligand>
        <name>ATP</name>
        <dbReference type="ChEBI" id="CHEBI:30616"/>
    </ligand>
</feature>
<feature type="binding site" evidence="1">
    <location>
        <position position="8"/>
    </location>
    <ligand>
        <name>CTP</name>
        <dbReference type="ChEBI" id="CHEBI:37563"/>
    </ligand>
</feature>
<feature type="binding site" evidence="1">
    <location>
        <position position="11"/>
    </location>
    <ligand>
        <name>ATP</name>
        <dbReference type="ChEBI" id="CHEBI:30616"/>
    </ligand>
</feature>
<feature type="binding site" evidence="1">
    <location>
        <position position="11"/>
    </location>
    <ligand>
        <name>CTP</name>
        <dbReference type="ChEBI" id="CHEBI:37563"/>
    </ligand>
</feature>
<feature type="binding site" evidence="1">
    <location>
        <position position="21"/>
    </location>
    <ligand>
        <name>Mg(2+)</name>
        <dbReference type="ChEBI" id="CHEBI:18420"/>
    </ligand>
</feature>
<feature type="binding site" evidence="1">
    <location>
        <position position="23"/>
    </location>
    <ligand>
        <name>Mg(2+)</name>
        <dbReference type="ChEBI" id="CHEBI:18420"/>
    </ligand>
</feature>
<feature type="binding site" evidence="1">
    <location>
        <position position="91"/>
    </location>
    <ligand>
        <name>ATP</name>
        <dbReference type="ChEBI" id="CHEBI:30616"/>
    </ligand>
</feature>
<feature type="binding site" evidence="1">
    <location>
        <position position="91"/>
    </location>
    <ligand>
        <name>CTP</name>
        <dbReference type="ChEBI" id="CHEBI:37563"/>
    </ligand>
</feature>
<feature type="binding site" evidence="1">
    <location>
        <position position="137"/>
    </location>
    <ligand>
        <name>ATP</name>
        <dbReference type="ChEBI" id="CHEBI:30616"/>
    </ligand>
</feature>
<feature type="binding site" evidence="1">
    <location>
        <position position="137"/>
    </location>
    <ligand>
        <name>CTP</name>
        <dbReference type="ChEBI" id="CHEBI:37563"/>
    </ligand>
</feature>
<feature type="binding site" evidence="1">
    <location>
        <position position="140"/>
    </location>
    <ligand>
        <name>ATP</name>
        <dbReference type="ChEBI" id="CHEBI:30616"/>
    </ligand>
</feature>
<feature type="binding site" evidence="1">
    <location>
        <position position="140"/>
    </location>
    <ligand>
        <name>CTP</name>
        <dbReference type="ChEBI" id="CHEBI:37563"/>
    </ligand>
</feature>
<proteinExistence type="inferred from homology"/>
<protein>
    <recommendedName>
        <fullName evidence="1">Multifunctional CCA protein</fullName>
    </recommendedName>
    <domain>
        <recommendedName>
            <fullName evidence="1">CCA-adding enzyme</fullName>
            <ecNumber evidence="1">2.7.7.72</ecNumber>
        </recommendedName>
        <alternativeName>
            <fullName evidence="1">CCA tRNA nucleotidyltransferase</fullName>
        </alternativeName>
        <alternativeName>
            <fullName evidence="1">tRNA CCA-pyrophosphorylase</fullName>
        </alternativeName>
        <alternativeName>
            <fullName evidence="1">tRNA adenylyl-/cytidylyl-transferase</fullName>
        </alternativeName>
        <alternativeName>
            <fullName evidence="1">tRNA nucleotidyltransferase</fullName>
        </alternativeName>
        <alternativeName>
            <fullName evidence="1">tRNA-NT</fullName>
        </alternativeName>
    </domain>
    <domain>
        <recommendedName>
            <fullName evidence="1">2'-nucleotidase</fullName>
            <ecNumber evidence="1">3.1.3.-</ecNumber>
        </recommendedName>
    </domain>
    <domain>
        <recommendedName>
            <fullName evidence="1">2',3'-cyclic phosphodiesterase</fullName>
            <ecNumber evidence="1">3.1.4.-</ecNumber>
        </recommendedName>
    </domain>
    <domain>
        <recommendedName>
            <fullName evidence="1">Phosphatase</fullName>
            <ecNumber evidence="1">3.1.3.-</ecNumber>
        </recommendedName>
    </domain>
</protein>
<reference key="1">
    <citation type="journal article" date="2005" name="Science">
        <title>Life at depth: Photobacterium profundum genome sequence and expression analysis.</title>
        <authorList>
            <person name="Vezzi A."/>
            <person name="Campanaro S."/>
            <person name="D'Angelo M."/>
            <person name="Simonato F."/>
            <person name="Vitulo N."/>
            <person name="Lauro F.M."/>
            <person name="Cestaro A."/>
            <person name="Malacrida G."/>
            <person name="Simionati B."/>
            <person name="Cannata N."/>
            <person name="Romualdi C."/>
            <person name="Bartlett D.H."/>
            <person name="Valle G."/>
        </authorList>
    </citation>
    <scope>NUCLEOTIDE SEQUENCE [LARGE SCALE GENOMIC DNA]</scope>
    <source>
        <strain>ATCC BAA-1253 / SS9</strain>
    </source>
</reference>
<gene>
    <name evidence="1" type="primary">cca</name>
    <name type="ordered locus">PBPRA0439</name>
</gene>
<evidence type="ECO:0000255" key="1">
    <source>
        <dbReference type="HAMAP-Rule" id="MF_01261"/>
    </source>
</evidence>